<dbReference type="EC" id="3.4.21.92" evidence="1"/>
<dbReference type="EMBL" id="CP000084">
    <property type="protein sequence ID" value="AAZ21695.1"/>
    <property type="molecule type" value="Genomic_DNA"/>
</dbReference>
<dbReference type="RefSeq" id="WP_006997039.1">
    <property type="nucleotide sequence ID" value="NC_007205.1"/>
</dbReference>
<dbReference type="SMR" id="Q4FM94"/>
<dbReference type="STRING" id="335992.SAR11_0880"/>
<dbReference type="MEROPS" id="S14.001"/>
<dbReference type="GeneID" id="66295373"/>
<dbReference type="KEGG" id="pub:SAR11_0880"/>
<dbReference type="eggNOG" id="COG0740">
    <property type="taxonomic scope" value="Bacteria"/>
</dbReference>
<dbReference type="HOGENOM" id="CLU_058707_3_2_5"/>
<dbReference type="OrthoDB" id="9802800at2"/>
<dbReference type="Proteomes" id="UP000002528">
    <property type="component" value="Chromosome"/>
</dbReference>
<dbReference type="GO" id="GO:0005737">
    <property type="term" value="C:cytoplasm"/>
    <property type="evidence" value="ECO:0007669"/>
    <property type="project" value="UniProtKB-SubCell"/>
</dbReference>
<dbReference type="GO" id="GO:0009368">
    <property type="term" value="C:endopeptidase Clp complex"/>
    <property type="evidence" value="ECO:0007669"/>
    <property type="project" value="TreeGrafter"/>
</dbReference>
<dbReference type="GO" id="GO:0004176">
    <property type="term" value="F:ATP-dependent peptidase activity"/>
    <property type="evidence" value="ECO:0007669"/>
    <property type="project" value="InterPro"/>
</dbReference>
<dbReference type="GO" id="GO:0051117">
    <property type="term" value="F:ATPase binding"/>
    <property type="evidence" value="ECO:0007669"/>
    <property type="project" value="TreeGrafter"/>
</dbReference>
<dbReference type="GO" id="GO:0004252">
    <property type="term" value="F:serine-type endopeptidase activity"/>
    <property type="evidence" value="ECO:0007669"/>
    <property type="project" value="UniProtKB-UniRule"/>
</dbReference>
<dbReference type="GO" id="GO:0006515">
    <property type="term" value="P:protein quality control for misfolded or incompletely synthesized proteins"/>
    <property type="evidence" value="ECO:0007669"/>
    <property type="project" value="TreeGrafter"/>
</dbReference>
<dbReference type="CDD" id="cd07017">
    <property type="entry name" value="S14_ClpP_2"/>
    <property type="match status" value="1"/>
</dbReference>
<dbReference type="FunFam" id="3.90.226.10:FF:000001">
    <property type="entry name" value="ATP-dependent Clp protease proteolytic subunit"/>
    <property type="match status" value="1"/>
</dbReference>
<dbReference type="Gene3D" id="3.90.226.10">
    <property type="entry name" value="2-enoyl-CoA Hydratase, Chain A, domain 1"/>
    <property type="match status" value="1"/>
</dbReference>
<dbReference type="HAMAP" id="MF_00444">
    <property type="entry name" value="ClpP"/>
    <property type="match status" value="1"/>
</dbReference>
<dbReference type="InterPro" id="IPR001907">
    <property type="entry name" value="ClpP"/>
</dbReference>
<dbReference type="InterPro" id="IPR029045">
    <property type="entry name" value="ClpP/crotonase-like_dom_sf"/>
</dbReference>
<dbReference type="InterPro" id="IPR023562">
    <property type="entry name" value="ClpP/TepA"/>
</dbReference>
<dbReference type="InterPro" id="IPR033135">
    <property type="entry name" value="ClpP_His_AS"/>
</dbReference>
<dbReference type="InterPro" id="IPR018215">
    <property type="entry name" value="ClpP_Ser_AS"/>
</dbReference>
<dbReference type="NCBIfam" id="TIGR00493">
    <property type="entry name" value="clpP"/>
    <property type="match status" value="1"/>
</dbReference>
<dbReference type="NCBIfam" id="NF001368">
    <property type="entry name" value="PRK00277.1"/>
    <property type="match status" value="1"/>
</dbReference>
<dbReference type="NCBIfam" id="NF009205">
    <property type="entry name" value="PRK12553.1"/>
    <property type="match status" value="1"/>
</dbReference>
<dbReference type="PANTHER" id="PTHR10381">
    <property type="entry name" value="ATP-DEPENDENT CLP PROTEASE PROTEOLYTIC SUBUNIT"/>
    <property type="match status" value="1"/>
</dbReference>
<dbReference type="PANTHER" id="PTHR10381:SF70">
    <property type="entry name" value="ATP-DEPENDENT CLP PROTEASE PROTEOLYTIC SUBUNIT"/>
    <property type="match status" value="1"/>
</dbReference>
<dbReference type="Pfam" id="PF00574">
    <property type="entry name" value="CLP_protease"/>
    <property type="match status" value="1"/>
</dbReference>
<dbReference type="PRINTS" id="PR00127">
    <property type="entry name" value="CLPPROTEASEP"/>
</dbReference>
<dbReference type="SUPFAM" id="SSF52096">
    <property type="entry name" value="ClpP/crotonase"/>
    <property type="match status" value="1"/>
</dbReference>
<dbReference type="PROSITE" id="PS00382">
    <property type="entry name" value="CLP_PROTEASE_HIS"/>
    <property type="match status" value="1"/>
</dbReference>
<dbReference type="PROSITE" id="PS00381">
    <property type="entry name" value="CLP_PROTEASE_SER"/>
    <property type="match status" value="1"/>
</dbReference>
<keyword id="KW-0963">Cytoplasm</keyword>
<keyword id="KW-0378">Hydrolase</keyword>
<keyword id="KW-0645">Protease</keyword>
<keyword id="KW-1185">Reference proteome</keyword>
<keyword id="KW-0720">Serine protease</keyword>
<organism>
    <name type="scientific">Pelagibacter ubique (strain HTCC1062)</name>
    <dbReference type="NCBI Taxonomy" id="335992"/>
    <lineage>
        <taxon>Bacteria</taxon>
        <taxon>Pseudomonadati</taxon>
        <taxon>Pseudomonadota</taxon>
        <taxon>Alphaproteobacteria</taxon>
        <taxon>Candidatus Pelagibacterales</taxon>
        <taxon>Candidatus Pelagibacteraceae</taxon>
        <taxon>Candidatus Pelagibacter</taxon>
    </lineage>
</organism>
<feature type="chain" id="PRO_0000226453" description="ATP-dependent Clp protease proteolytic subunit">
    <location>
        <begin position="1"/>
        <end position="203"/>
    </location>
</feature>
<feature type="active site" description="Nucleophile" evidence="1">
    <location>
        <position position="107"/>
    </location>
</feature>
<feature type="active site" evidence="1">
    <location>
        <position position="132"/>
    </location>
</feature>
<comment type="function">
    <text evidence="1">Cleaves peptides in various proteins in a process that requires ATP hydrolysis. Has a chymotrypsin-like activity. Plays a major role in the degradation of misfolded proteins.</text>
</comment>
<comment type="catalytic activity">
    <reaction evidence="1">
        <text>Hydrolysis of proteins to small peptides in the presence of ATP and magnesium. alpha-casein is the usual test substrate. In the absence of ATP, only oligopeptides shorter than five residues are hydrolyzed (such as succinyl-Leu-Tyr-|-NHMec, and Leu-Tyr-Leu-|-Tyr-Trp, in which cleavage of the -Tyr-|-Leu- and -Tyr-|-Trp bonds also occurs).</text>
        <dbReference type="EC" id="3.4.21.92"/>
    </reaction>
</comment>
<comment type="subunit">
    <text evidence="1">Fourteen ClpP subunits assemble into 2 heptameric rings which stack back to back to give a disk-like structure with a central cavity, resembling the structure of eukaryotic proteasomes.</text>
</comment>
<comment type="subcellular location">
    <subcellularLocation>
        <location evidence="1">Cytoplasm</location>
    </subcellularLocation>
</comment>
<comment type="similarity">
    <text evidence="1">Belongs to the peptidase S14 family.</text>
</comment>
<protein>
    <recommendedName>
        <fullName evidence="1">ATP-dependent Clp protease proteolytic subunit</fullName>
        <ecNumber evidence="1">3.4.21.92</ecNumber>
    </recommendedName>
    <alternativeName>
        <fullName evidence="1">Endopeptidase Clp</fullName>
    </alternativeName>
</protein>
<gene>
    <name evidence="1" type="primary">clpP</name>
    <name type="ordered locus">SAR11_0880</name>
</gene>
<accession>Q4FM94</accession>
<name>CLPP_PELUB</name>
<proteinExistence type="inferred from homology"/>
<reference key="1">
    <citation type="journal article" date="2005" name="Science">
        <title>Genome streamlining in a cosmopolitan oceanic bacterium.</title>
        <authorList>
            <person name="Giovannoni S.J."/>
            <person name="Tripp H.J."/>
            <person name="Givan S."/>
            <person name="Podar M."/>
            <person name="Vergin K.L."/>
            <person name="Baptista D."/>
            <person name="Bibbs L."/>
            <person name="Eads J."/>
            <person name="Richardson T.H."/>
            <person name="Noordewier M."/>
            <person name="Rappe M.S."/>
            <person name="Short J.M."/>
            <person name="Carrington J.C."/>
            <person name="Mathur E.J."/>
        </authorList>
    </citation>
    <scope>NUCLEOTIDE SEQUENCE [LARGE SCALE GENOMIC DNA]</scope>
    <source>
        <strain>HTCC1062</strain>
    </source>
</reference>
<evidence type="ECO:0000255" key="1">
    <source>
        <dbReference type="HAMAP-Rule" id="MF_00444"/>
    </source>
</evidence>
<sequence>MTTNLLDQMNTLVPMVVEQSNKGERAYDIYSRLLKERIIFLVGPINDNVASLVTAQLLFLESEDPKKEINLYINSPGGLVTAGLGIYDTMQYIKPDVSTLCIGQAASMGSFLLAAGKKGKRFSLPNSRIMVHQPSAGFQGQATDIEIHANEVLALKKRLNEIYSKHTGKSVDDVKKALERDNFMTPDTAKEFGLIDEVVENRS</sequence>